<protein>
    <recommendedName>
        <fullName evidence="1">Adenylate kinase</fullName>
        <shortName evidence="1">AK</shortName>
        <ecNumber evidence="1">2.7.4.3</ecNumber>
    </recommendedName>
    <alternativeName>
        <fullName evidence="1">ATP-AMP transphosphorylase</fullName>
    </alternativeName>
    <alternativeName>
        <fullName evidence="1">ATP:AMP phosphotransferase</fullName>
    </alternativeName>
    <alternativeName>
        <fullName evidence="1">Adenylate monophosphate kinase</fullName>
    </alternativeName>
</protein>
<dbReference type="EC" id="2.7.4.3" evidence="1"/>
<dbReference type="EMBL" id="AE008384">
    <property type="protein sequence ID" value="AAM31844.1"/>
    <property type="molecule type" value="Genomic_DNA"/>
</dbReference>
<dbReference type="RefSeq" id="WP_011034079.1">
    <property type="nucleotide sequence ID" value="NC_003901.1"/>
</dbReference>
<dbReference type="SMR" id="Q8PV26"/>
<dbReference type="KEGG" id="mma:MM_2148"/>
<dbReference type="PATRIC" id="fig|192952.21.peg.2462"/>
<dbReference type="eggNOG" id="arCOG01046">
    <property type="taxonomic scope" value="Archaea"/>
</dbReference>
<dbReference type="HOGENOM" id="CLU_032354_1_2_2"/>
<dbReference type="UniPathway" id="UPA00588">
    <property type="reaction ID" value="UER00649"/>
</dbReference>
<dbReference type="Proteomes" id="UP000000595">
    <property type="component" value="Chromosome"/>
</dbReference>
<dbReference type="GO" id="GO:0005737">
    <property type="term" value="C:cytoplasm"/>
    <property type="evidence" value="ECO:0007669"/>
    <property type="project" value="UniProtKB-SubCell"/>
</dbReference>
<dbReference type="GO" id="GO:0004017">
    <property type="term" value="F:adenylate kinase activity"/>
    <property type="evidence" value="ECO:0007669"/>
    <property type="project" value="UniProtKB-UniRule"/>
</dbReference>
<dbReference type="GO" id="GO:0005524">
    <property type="term" value="F:ATP binding"/>
    <property type="evidence" value="ECO:0007669"/>
    <property type="project" value="UniProtKB-UniRule"/>
</dbReference>
<dbReference type="GO" id="GO:0008270">
    <property type="term" value="F:zinc ion binding"/>
    <property type="evidence" value="ECO:0007669"/>
    <property type="project" value="UniProtKB-UniRule"/>
</dbReference>
<dbReference type="GO" id="GO:0044209">
    <property type="term" value="P:AMP salvage"/>
    <property type="evidence" value="ECO:0007669"/>
    <property type="project" value="UniProtKB-UniRule"/>
</dbReference>
<dbReference type="CDD" id="cd01428">
    <property type="entry name" value="ADK"/>
    <property type="match status" value="1"/>
</dbReference>
<dbReference type="FunFam" id="3.40.50.300:FF:000106">
    <property type="entry name" value="Adenylate kinase mitochondrial"/>
    <property type="match status" value="1"/>
</dbReference>
<dbReference type="Gene3D" id="3.40.50.300">
    <property type="entry name" value="P-loop containing nucleotide triphosphate hydrolases"/>
    <property type="match status" value="1"/>
</dbReference>
<dbReference type="HAMAP" id="MF_00235">
    <property type="entry name" value="Adenylate_kinase_Adk"/>
    <property type="match status" value="1"/>
</dbReference>
<dbReference type="InterPro" id="IPR006259">
    <property type="entry name" value="Adenyl_kin_sub"/>
</dbReference>
<dbReference type="InterPro" id="IPR000850">
    <property type="entry name" value="Adenylat/UMP-CMP_kin"/>
</dbReference>
<dbReference type="InterPro" id="IPR033690">
    <property type="entry name" value="Adenylat_kinase_CS"/>
</dbReference>
<dbReference type="InterPro" id="IPR007862">
    <property type="entry name" value="Adenylate_kinase_lid-dom"/>
</dbReference>
<dbReference type="InterPro" id="IPR027417">
    <property type="entry name" value="P-loop_NTPase"/>
</dbReference>
<dbReference type="NCBIfam" id="TIGR01351">
    <property type="entry name" value="adk"/>
    <property type="match status" value="1"/>
</dbReference>
<dbReference type="NCBIfam" id="NF001380">
    <property type="entry name" value="PRK00279.1-2"/>
    <property type="match status" value="1"/>
</dbReference>
<dbReference type="NCBIfam" id="NF001381">
    <property type="entry name" value="PRK00279.1-3"/>
    <property type="match status" value="1"/>
</dbReference>
<dbReference type="NCBIfam" id="NF011100">
    <property type="entry name" value="PRK14527.1"/>
    <property type="match status" value="1"/>
</dbReference>
<dbReference type="PANTHER" id="PTHR23359">
    <property type="entry name" value="NUCLEOTIDE KINASE"/>
    <property type="match status" value="1"/>
</dbReference>
<dbReference type="Pfam" id="PF00406">
    <property type="entry name" value="ADK"/>
    <property type="match status" value="1"/>
</dbReference>
<dbReference type="Pfam" id="PF05191">
    <property type="entry name" value="ADK_lid"/>
    <property type="match status" value="1"/>
</dbReference>
<dbReference type="PRINTS" id="PR00094">
    <property type="entry name" value="ADENYLTKNASE"/>
</dbReference>
<dbReference type="SUPFAM" id="SSF52540">
    <property type="entry name" value="P-loop containing nucleoside triphosphate hydrolases"/>
    <property type="match status" value="1"/>
</dbReference>
<dbReference type="PROSITE" id="PS00113">
    <property type="entry name" value="ADENYLATE_KINASE"/>
    <property type="match status" value="1"/>
</dbReference>
<name>KAD_METMA</name>
<reference key="1">
    <citation type="journal article" date="2002" name="J. Mol. Microbiol. Biotechnol.">
        <title>The genome of Methanosarcina mazei: evidence for lateral gene transfer between Bacteria and Archaea.</title>
        <authorList>
            <person name="Deppenmeier U."/>
            <person name="Johann A."/>
            <person name="Hartsch T."/>
            <person name="Merkl R."/>
            <person name="Schmitz R.A."/>
            <person name="Martinez-Arias R."/>
            <person name="Henne A."/>
            <person name="Wiezer A."/>
            <person name="Baeumer S."/>
            <person name="Jacobi C."/>
            <person name="Brueggemann H."/>
            <person name="Lienard T."/>
            <person name="Christmann A."/>
            <person name="Boemecke M."/>
            <person name="Steckel S."/>
            <person name="Bhattacharyya A."/>
            <person name="Lykidis A."/>
            <person name="Overbeek R."/>
            <person name="Klenk H.-P."/>
            <person name="Gunsalus R.P."/>
            <person name="Fritz H.-J."/>
            <person name="Gottschalk G."/>
        </authorList>
    </citation>
    <scope>NUCLEOTIDE SEQUENCE [LARGE SCALE GENOMIC DNA]</scope>
    <source>
        <strain>ATCC BAA-159 / DSM 3647 / Goe1 / Go1 / JCM 11833 / OCM 88</strain>
    </source>
</reference>
<accession>Q8PV26</accession>
<proteinExistence type="inferred from homology"/>
<organism>
    <name type="scientific">Methanosarcina mazei (strain ATCC BAA-159 / DSM 3647 / Goe1 / Go1 / JCM 11833 / OCM 88)</name>
    <name type="common">Methanosarcina frisia</name>
    <dbReference type="NCBI Taxonomy" id="192952"/>
    <lineage>
        <taxon>Archaea</taxon>
        <taxon>Methanobacteriati</taxon>
        <taxon>Methanobacteriota</taxon>
        <taxon>Stenosarchaea group</taxon>
        <taxon>Methanomicrobia</taxon>
        <taxon>Methanosarcinales</taxon>
        <taxon>Methanosarcinaceae</taxon>
        <taxon>Methanosarcina</taxon>
    </lineage>
</organism>
<sequence length="215" mass="23725">MNIILFGPPGAGKGTQAKKLVDFYGIPQISTGDILRANVREGTELGLAAKAYMDKGELVPDNVLIGIIKNRLNEEDCKKGFILDGYPRTVPQADALETILDEIDKPIDVVLNLEVPDEVLVERISGRLMCKCGASYHTIANPPKKDNICDICGGEVYQRDDDKAEAVQNRLDVYKKQTQPLINYYEEKGILVTLDGTKDINVVFEDIKAVLAKFA</sequence>
<comment type="function">
    <text evidence="1">Catalyzes the reversible transfer of the terminal phosphate group between ATP and AMP. Plays an important role in cellular energy homeostasis and in adenine nucleotide metabolism.</text>
</comment>
<comment type="catalytic activity">
    <reaction evidence="1">
        <text>AMP + ATP = 2 ADP</text>
        <dbReference type="Rhea" id="RHEA:12973"/>
        <dbReference type="ChEBI" id="CHEBI:30616"/>
        <dbReference type="ChEBI" id="CHEBI:456215"/>
        <dbReference type="ChEBI" id="CHEBI:456216"/>
        <dbReference type="EC" id="2.7.4.3"/>
    </reaction>
</comment>
<comment type="pathway">
    <text evidence="1">Purine metabolism; AMP biosynthesis via salvage pathway; AMP from ADP: step 1/1.</text>
</comment>
<comment type="subunit">
    <text evidence="1">Monomer.</text>
</comment>
<comment type="subcellular location">
    <subcellularLocation>
        <location evidence="1">Cytoplasm</location>
    </subcellularLocation>
</comment>
<comment type="domain">
    <text evidence="1">Consists of three domains, a large central CORE domain and two small peripheral domains, NMPbind and LID, which undergo movements during catalysis. The LID domain closes over the site of phosphoryl transfer upon ATP binding. Assembling and dissambling the active center during each catalytic cycle provides an effective means to prevent ATP hydrolysis. Some bacteria have evolved a zinc-coordinating structure that stabilizes the LID domain.</text>
</comment>
<comment type="similarity">
    <text evidence="1">Belongs to the adenylate kinase family.</text>
</comment>
<keyword id="KW-0067">ATP-binding</keyword>
<keyword id="KW-0963">Cytoplasm</keyword>
<keyword id="KW-0418">Kinase</keyword>
<keyword id="KW-0479">Metal-binding</keyword>
<keyword id="KW-0545">Nucleotide biosynthesis</keyword>
<keyword id="KW-0547">Nucleotide-binding</keyword>
<keyword id="KW-0808">Transferase</keyword>
<keyword id="KW-0862">Zinc</keyword>
<feature type="chain" id="PRO_0000158900" description="Adenylate kinase">
    <location>
        <begin position="1"/>
        <end position="215"/>
    </location>
</feature>
<feature type="region of interest" description="NMP" evidence="1">
    <location>
        <begin position="30"/>
        <end position="59"/>
    </location>
</feature>
<feature type="region of interest" description="LID" evidence="1">
    <location>
        <begin position="126"/>
        <end position="162"/>
    </location>
</feature>
<feature type="binding site" evidence="1">
    <location>
        <begin position="10"/>
        <end position="15"/>
    </location>
    <ligand>
        <name>ATP</name>
        <dbReference type="ChEBI" id="CHEBI:30616"/>
    </ligand>
</feature>
<feature type="binding site" evidence="1">
    <location>
        <position position="31"/>
    </location>
    <ligand>
        <name>AMP</name>
        <dbReference type="ChEBI" id="CHEBI:456215"/>
    </ligand>
</feature>
<feature type="binding site" evidence="1">
    <location>
        <position position="36"/>
    </location>
    <ligand>
        <name>AMP</name>
        <dbReference type="ChEBI" id="CHEBI:456215"/>
    </ligand>
</feature>
<feature type="binding site" evidence="1">
    <location>
        <begin position="57"/>
        <end position="59"/>
    </location>
    <ligand>
        <name>AMP</name>
        <dbReference type="ChEBI" id="CHEBI:456215"/>
    </ligand>
</feature>
<feature type="binding site" evidence="1">
    <location>
        <begin position="85"/>
        <end position="88"/>
    </location>
    <ligand>
        <name>AMP</name>
        <dbReference type="ChEBI" id="CHEBI:456215"/>
    </ligand>
</feature>
<feature type="binding site" evidence="1">
    <location>
        <position position="92"/>
    </location>
    <ligand>
        <name>AMP</name>
        <dbReference type="ChEBI" id="CHEBI:456215"/>
    </ligand>
</feature>
<feature type="binding site" evidence="1">
    <location>
        <position position="127"/>
    </location>
    <ligand>
        <name>ATP</name>
        <dbReference type="ChEBI" id="CHEBI:30616"/>
    </ligand>
</feature>
<feature type="binding site" evidence="1">
    <location>
        <position position="130"/>
    </location>
    <ligand>
        <name>Zn(2+)</name>
        <dbReference type="ChEBI" id="CHEBI:29105"/>
        <note>structural</note>
    </ligand>
</feature>
<feature type="binding site" evidence="1">
    <location>
        <position position="132"/>
    </location>
    <ligand>
        <name>Zn(2+)</name>
        <dbReference type="ChEBI" id="CHEBI:29105"/>
        <note>structural</note>
    </ligand>
</feature>
<feature type="binding site" evidence="1">
    <location>
        <begin position="135"/>
        <end position="136"/>
    </location>
    <ligand>
        <name>ATP</name>
        <dbReference type="ChEBI" id="CHEBI:30616"/>
    </ligand>
</feature>
<feature type="binding site" evidence="1">
    <location>
        <position position="149"/>
    </location>
    <ligand>
        <name>Zn(2+)</name>
        <dbReference type="ChEBI" id="CHEBI:29105"/>
        <note>structural</note>
    </ligand>
</feature>
<feature type="binding site" evidence="1">
    <location>
        <position position="152"/>
    </location>
    <ligand>
        <name>Zn(2+)</name>
        <dbReference type="ChEBI" id="CHEBI:29105"/>
        <note>structural</note>
    </ligand>
</feature>
<feature type="binding site" evidence="1">
    <location>
        <position position="159"/>
    </location>
    <ligand>
        <name>AMP</name>
        <dbReference type="ChEBI" id="CHEBI:456215"/>
    </ligand>
</feature>
<feature type="binding site" evidence="1">
    <location>
        <position position="170"/>
    </location>
    <ligand>
        <name>AMP</name>
        <dbReference type="ChEBI" id="CHEBI:456215"/>
    </ligand>
</feature>
<feature type="binding site" evidence="1">
    <location>
        <position position="198"/>
    </location>
    <ligand>
        <name>ATP</name>
        <dbReference type="ChEBI" id="CHEBI:30616"/>
    </ligand>
</feature>
<gene>
    <name evidence="1" type="primary">adk</name>
    <name type="ordered locus">MM_2148</name>
</gene>
<evidence type="ECO:0000255" key="1">
    <source>
        <dbReference type="HAMAP-Rule" id="MF_00235"/>
    </source>
</evidence>